<organism>
    <name type="scientific">Rickettsia prowazekii (strain Madrid E)</name>
    <dbReference type="NCBI Taxonomy" id="272947"/>
    <lineage>
        <taxon>Bacteria</taxon>
        <taxon>Pseudomonadati</taxon>
        <taxon>Pseudomonadota</taxon>
        <taxon>Alphaproteobacteria</taxon>
        <taxon>Rickettsiales</taxon>
        <taxon>Rickettsiaceae</taxon>
        <taxon>Rickettsieae</taxon>
        <taxon>Rickettsia</taxon>
        <taxon>typhus group</taxon>
    </lineage>
</organism>
<evidence type="ECO:0000255" key="1">
    <source>
        <dbReference type="HAMAP-Rule" id="MF_00580"/>
    </source>
</evidence>
<evidence type="ECO:0000305" key="2"/>
<comment type="function">
    <text evidence="1">Together with the chaperonin GroEL, plays an essential role in assisting protein folding. The GroEL-GroES system forms a nano-cage that allows encapsulation of the non-native substrate proteins and provides a physical environment optimized to promote and accelerate protein folding. GroES binds to the apical surface of the GroEL ring, thereby capping the opening of the GroEL channel.</text>
</comment>
<comment type="subunit">
    <text evidence="1">Heptamer of 7 subunits arranged in a ring. Interacts with the chaperonin GroEL.</text>
</comment>
<comment type="subcellular location">
    <subcellularLocation>
        <location evidence="1">Cytoplasm</location>
    </subcellularLocation>
</comment>
<comment type="similarity">
    <text evidence="1 2">Belongs to the GroES chaperonin family.</text>
</comment>
<dbReference type="EMBL" id="AJ235272">
    <property type="protein sequence ID" value="CAA15068.1"/>
    <property type="molecule type" value="Genomic_DNA"/>
</dbReference>
<dbReference type="EMBL" id="Y15783">
    <property type="protein sequence ID" value="CAB40142.1"/>
    <property type="molecule type" value="Genomic_DNA"/>
</dbReference>
<dbReference type="PIR" id="B71668">
    <property type="entry name" value="B71668"/>
</dbReference>
<dbReference type="RefSeq" id="NP_220992.1">
    <property type="nucleotide sequence ID" value="NC_000963.1"/>
</dbReference>
<dbReference type="RefSeq" id="WP_004596263.1">
    <property type="nucleotide sequence ID" value="NC_000963.1"/>
</dbReference>
<dbReference type="SMR" id="Q9ZCT6"/>
<dbReference type="STRING" id="272947.gene:17555704"/>
<dbReference type="EnsemblBacteria" id="CAA15068">
    <property type="protein sequence ID" value="CAA15068"/>
    <property type="gene ID" value="CAA15068"/>
</dbReference>
<dbReference type="KEGG" id="rpr:RP627"/>
<dbReference type="PATRIC" id="fig|272947.5.peg.648"/>
<dbReference type="eggNOG" id="COG0234">
    <property type="taxonomic scope" value="Bacteria"/>
</dbReference>
<dbReference type="HOGENOM" id="CLU_132825_1_0_5"/>
<dbReference type="OrthoDB" id="9806791at2"/>
<dbReference type="Proteomes" id="UP000002480">
    <property type="component" value="Chromosome"/>
</dbReference>
<dbReference type="GO" id="GO:0005737">
    <property type="term" value="C:cytoplasm"/>
    <property type="evidence" value="ECO:0007669"/>
    <property type="project" value="UniProtKB-SubCell"/>
</dbReference>
<dbReference type="GO" id="GO:0005524">
    <property type="term" value="F:ATP binding"/>
    <property type="evidence" value="ECO:0007669"/>
    <property type="project" value="InterPro"/>
</dbReference>
<dbReference type="GO" id="GO:0046872">
    <property type="term" value="F:metal ion binding"/>
    <property type="evidence" value="ECO:0007669"/>
    <property type="project" value="TreeGrafter"/>
</dbReference>
<dbReference type="GO" id="GO:0044183">
    <property type="term" value="F:protein folding chaperone"/>
    <property type="evidence" value="ECO:0007669"/>
    <property type="project" value="InterPro"/>
</dbReference>
<dbReference type="GO" id="GO:0051087">
    <property type="term" value="F:protein-folding chaperone binding"/>
    <property type="evidence" value="ECO:0007669"/>
    <property type="project" value="TreeGrafter"/>
</dbReference>
<dbReference type="GO" id="GO:0051082">
    <property type="term" value="F:unfolded protein binding"/>
    <property type="evidence" value="ECO:0007669"/>
    <property type="project" value="TreeGrafter"/>
</dbReference>
<dbReference type="GO" id="GO:0051085">
    <property type="term" value="P:chaperone cofactor-dependent protein refolding"/>
    <property type="evidence" value="ECO:0007669"/>
    <property type="project" value="TreeGrafter"/>
</dbReference>
<dbReference type="CDD" id="cd00320">
    <property type="entry name" value="cpn10"/>
    <property type="match status" value="1"/>
</dbReference>
<dbReference type="FunFam" id="2.30.33.40:FF:000001">
    <property type="entry name" value="10 kDa chaperonin"/>
    <property type="match status" value="1"/>
</dbReference>
<dbReference type="Gene3D" id="2.30.33.40">
    <property type="entry name" value="GroES chaperonin"/>
    <property type="match status" value="1"/>
</dbReference>
<dbReference type="HAMAP" id="MF_00580">
    <property type="entry name" value="CH10"/>
    <property type="match status" value="1"/>
</dbReference>
<dbReference type="InterPro" id="IPR020818">
    <property type="entry name" value="Chaperonin_GroES"/>
</dbReference>
<dbReference type="InterPro" id="IPR037124">
    <property type="entry name" value="Chaperonin_GroES_sf"/>
</dbReference>
<dbReference type="InterPro" id="IPR018369">
    <property type="entry name" value="Chaprnonin_Cpn10_CS"/>
</dbReference>
<dbReference type="InterPro" id="IPR011032">
    <property type="entry name" value="GroES-like_sf"/>
</dbReference>
<dbReference type="NCBIfam" id="NF001527">
    <property type="entry name" value="PRK00364.1-2"/>
    <property type="match status" value="1"/>
</dbReference>
<dbReference type="NCBIfam" id="NF001529">
    <property type="entry name" value="PRK00364.1-5"/>
    <property type="match status" value="1"/>
</dbReference>
<dbReference type="NCBIfam" id="NF001531">
    <property type="entry name" value="PRK00364.2-2"/>
    <property type="match status" value="1"/>
</dbReference>
<dbReference type="NCBIfam" id="NF001533">
    <property type="entry name" value="PRK00364.2-4"/>
    <property type="match status" value="1"/>
</dbReference>
<dbReference type="PANTHER" id="PTHR10772">
    <property type="entry name" value="10 KDA HEAT SHOCK PROTEIN"/>
    <property type="match status" value="1"/>
</dbReference>
<dbReference type="PANTHER" id="PTHR10772:SF58">
    <property type="entry name" value="CO-CHAPERONIN GROES"/>
    <property type="match status" value="1"/>
</dbReference>
<dbReference type="Pfam" id="PF00166">
    <property type="entry name" value="Cpn10"/>
    <property type="match status" value="1"/>
</dbReference>
<dbReference type="PRINTS" id="PR00297">
    <property type="entry name" value="CHAPERONIN10"/>
</dbReference>
<dbReference type="SMART" id="SM00883">
    <property type="entry name" value="Cpn10"/>
    <property type="match status" value="1"/>
</dbReference>
<dbReference type="SUPFAM" id="SSF50129">
    <property type="entry name" value="GroES-like"/>
    <property type="match status" value="1"/>
</dbReference>
<dbReference type="PROSITE" id="PS00681">
    <property type="entry name" value="CHAPERONINS_CPN10"/>
    <property type="match status" value="1"/>
</dbReference>
<protein>
    <recommendedName>
        <fullName evidence="1">Co-chaperonin GroES</fullName>
    </recommendedName>
    <alternativeName>
        <fullName evidence="1">10 kDa chaperonin</fullName>
    </alternativeName>
    <alternativeName>
        <fullName evidence="1">Chaperonin-10</fullName>
        <shortName evidence="1">Cpn10</shortName>
    </alternativeName>
</protein>
<keyword id="KW-0143">Chaperone</keyword>
<keyword id="KW-0963">Cytoplasm</keyword>
<keyword id="KW-1185">Reference proteome</keyword>
<proteinExistence type="inferred from homology"/>
<reference key="1">
    <citation type="journal article" date="1998" name="Nature">
        <title>The genome sequence of Rickettsia prowazekii and the origin of mitochondria.</title>
        <authorList>
            <person name="Andersson S.G.E."/>
            <person name="Zomorodipour A."/>
            <person name="Andersson J.O."/>
            <person name="Sicheritz-Ponten T."/>
            <person name="Alsmark U.C.M."/>
            <person name="Podowski R.M."/>
            <person name="Naeslund A.K."/>
            <person name="Eriksson A.-S."/>
            <person name="Winkler H.H."/>
            <person name="Kurland C.G."/>
        </authorList>
    </citation>
    <scope>NUCLEOTIDE SEQUENCE [LARGE SCALE GENOMIC DNA]</scope>
    <source>
        <strain>Madrid E</strain>
    </source>
</reference>
<reference key="2">
    <citation type="journal article" date="1999" name="Russ. J. Genet.">
        <title>A groE-based phylogenetic analysis shows very close evolutionary relationship between mitochondria and rickettsia.</title>
        <authorList>
            <person name="Emelyanov V.V."/>
            <person name="Sinitsyn B.V."/>
        </authorList>
    </citation>
    <scope>NUCLEOTIDE SEQUENCE [GENOMIC DNA]</scope>
    <source>
        <strain>ATCC VR-142 / Breinl</strain>
    </source>
</reference>
<accession>Q9ZCT6</accession>
<sequence length="95" mass="10450">MSFKPLHDRIAIKPIENEEKTKGGIIIPDTAKEKPMQGEIVAVGNGVLNKNGEIHPLELKVGDKVLYGKWAGTEIEIKGEKLIVMKESDVFGIIN</sequence>
<gene>
    <name evidence="1" type="primary">groES</name>
    <name evidence="1" type="synonym">groS</name>
    <name type="synonym">mopB</name>
    <name type="ordered locus">RP627</name>
</gene>
<name>CH10_RICPR</name>
<feature type="chain" id="PRO_0000174830" description="Co-chaperonin GroES">
    <location>
        <begin position="1"/>
        <end position="95"/>
    </location>
</feature>